<comment type="function">
    <text evidence="1">Plays a role in pre-mRNA splicing as component of the U4/U6-U5 tri-snRNP complex that is involved in spliceosome assembly, and as component of the precatalytic spliceosome (spliceosome B complex). The heptameric LSM2-8 complex binds specifically to the 3'-terminal U-tract of U6 snRNA.</text>
</comment>
<comment type="subunit">
    <text evidence="1">Component of the precatalytic spliceosome (spliceosome B complex). Component of the U4/U6-U5 tri-snRNP complex, a building block of the precatalytic spliceosome (spliceosome B complex). LSM2, LSM3, LSM4, LSM5, LSM6, LSM7 and LSM8 form a heptameric, ring-shaped subcomplex (the LSM2-8 complex) that is part of the U4/U6-U5 tri-snRNP complex and the precatalytic spliceosome.</text>
</comment>
<comment type="subcellular location">
    <subcellularLocation>
        <location evidence="1">Nucleus</location>
    </subcellularLocation>
</comment>
<comment type="similarity">
    <text evidence="4">Belongs to the snRNP Sm proteins family.</text>
</comment>
<keyword id="KW-0507">mRNA processing</keyword>
<keyword id="KW-0508">mRNA splicing</keyword>
<keyword id="KW-0539">Nucleus</keyword>
<keyword id="KW-1185">Reference proteome</keyword>
<keyword id="KW-0687">Ribonucleoprotein</keyword>
<keyword id="KW-0694">RNA-binding</keyword>
<keyword id="KW-0747">Spliceosome</keyword>
<sequence length="123" mass="13593">MVLPLSLLKTAQNHPMLVELKNGETYNGHLKACDSWMNIHLVDVIFTSKDGDKFFKMSEAYVRGSTIKYLRIPETVVDLVKTEVNEVRRQQQREQSRGRGGGRGGRGGHRGGGGNRGGRGGAR</sequence>
<accession>Q19952</accession>
<organism>
    <name type="scientific">Caenorhabditis elegans</name>
    <dbReference type="NCBI Taxonomy" id="6239"/>
    <lineage>
        <taxon>Eukaryota</taxon>
        <taxon>Metazoa</taxon>
        <taxon>Ecdysozoa</taxon>
        <taxon>Nematoda</taxon>
        <taxon>Chromadorea</taxon>
        <taxon>Rhabditida</taxon>
        <taxon>Rhabditina</taxon>
        <taxon>Rhabditomorpha</taxon>
        <taxon>Rhabditoidea</taxon>
        <taxon>Rhabditidae</taxon>
        <taxon>Peloderinae</taxon>
        <taxon>Caenorhabditis</taxon>
    </lineage>
</organism>
<dbReference type="EMBL" id="FO080735">
    <property type="protein sequence ID" value="CCD66279.1"/>
    <property type="molecule type" value="Genomic_DNA"/>
</dbReference>
<dbReference type="PIR" id="T16234">
    <property type="entry name" value="T16234"/>
</dbReference>
<dbReference type="RefSeq" id="NP_495514.1">
    <property type="nucleotide sequence ID" value="NM_063113.7"/>
</dbReference>
<dbReference type="SMR" id="Q19952"/>
<dbReference type="BioGRID" id="39529">
    <property type="interactions" value="16"/>
</dbReference>
<dbReference type="FunCoup" id="Q19952">
    <property type="interactions" value="1758"/>
</dbReference>
<dbReference type="IntAct" id="Q19952">
    <property type="interactions" value="1"/>
</dbReference>
<dbReference type="STRING" id="6239.F32A5.7.1"/>
<dbReference type="PaxDb" id="6239-F32A5.7"/>
<dbReference type="PeptideAtlas" id="Q19952"/>
<dbReference type="EnsemblMetazoa" id="F32A5.7.1">
    <property type="protein sequence ID" value="F32A5.7.1"/>
    <property type="gene ID" value="WBGene00003078"/>
</dbReference>
<dbReference type="GeneID" id="174193"/>
<dbReference type="KEGG" id="cel:CELE_F32A5.7"/>
<dbReference type="UCSC" id="F32A5.7">
    <property type="organism name" value="c. elegans"/>
</dbReference>
<dbReference type="AGR" id="WB:WBGene00003078"/>
<dbReference type="CTD" id="3772280"/>
<dbReference type="WormBase" id="F32A5.7">
    <property type="protein sequence ID" value="CE01277"/>
    <property type="gene ID" value="WBGene00003078"/>
    <property type="gene designation" value="lsm-4"/>
</dbReference>
<dbReference type="eggNOG" id="KOG3293">
    <property type="taxonomic scope" value="Eukaryota"/>
</dbReference>
<dbReference type="GeneTree" id="ENSGT00610000086173"/>
<dbReference type="HOGENOM" id="CLU_099537_2_2_1"/>
<dbReference type="InParanoid" id="Q19952"/>
<dbReference type="OMA" id="RGAFGNR"/>
<dbReference type="PhylomeDB" id="Q19952"/>
<dbReference type="Reactome" id="R-CEL-430039">
    <property type="pathway name" value="mRNA decay by 5' to 3' exoribonuclease"/>
</dbReference>
<dbReference type="PRO" id="PR:Q19952"/>
<dbReference type="Proteomes" id="UP000001940">
    <property type="component" value="Chromosome II"/>
</dbReference>
<dbReference type="Bgee" id="WBGene00003078">
    <property type="expression patterns" value="Expressed in embryo and 4 other cell types or tissues"/>
</dbReference>
<dbReference type="GO" id="GO:0005737">
    <property type="term" value="C:cytoplasm"/>
    <property type="evidence" value="ECO:0000314"/>
    <property type="project" value="WormBase"/>
</dbReference>
<dbReference type="GO" id="GO:0005634">
    <property type="term" value="C:nucleus"/>
    <property type="evidence" value="ECO:0000314"/>
    <property type="project" value="WormBase"/>
</dbReference>
<dbReference type="GO" id="GO:0000932">
    <property type="term" value="C:P-body"/>
    <property type="evidence" value="ECO:0000318"/>
    <property type="project" value="GO_Central"/>
</dbReference>
<dbReference type="GO" id="GO:0097526">
    <property type="term" value="C:spliceosomal tri-snRNP complex"/>
    <property type="evidence" value="ECO:0000318"/>
    <property type="project" value="GO_Central"/>
</dbReference>
<dbReference type="GO" id="GO:0071005">
    <property type="term" value="C:U2-type precatalytic spliceosome"/>
    <property type="evidence" value="ECO:0000250"/>
    <property type="project" value="UniProtKB"/>
</dbReference>
<dbReference type="GO" id="GO:0046540">
    <property type="term" value="C:U4/U6 x U5 tri-snRNP complex"/>
    <property type="evidence" value="ECO:0000250"/>
    <property type="project" value="UniProtKB"/>
</dbReference>
<dbReference type="GO" id="GO:0005688">
    <property type="term" value="C:U6 snRNP"/>
    <property type="evidence" value="ECO:0000318"/>
    <property type="project" value="GO_Central"/>
</dbReference>
<dbReference type="GO" id="GO:0017070">
    <property type="term" value="F:U6 snRNA binding"/>
    <property type="evidence" value="ECO:0000318"/>
    <property type="project" value="GO_Central"/>
</dbReference>
<dbReference type="GO" id="GO:0000398">
    <property type="term" value="P:mRNA splicing, via spliceosome"/>
    <property type="evidence" value="ECO:0000250"/>
    <property type="project" value="UniProtKB"/>
</dbReference>
<dbReference type="GO" id="GO:0000956">
    <property type="term" value="P:nuclear-transcribed mRNA catabolic process"/>
    <property type="evidence" value="ECO:0007669"/>
    <property type="project" value="InterPro"/>
</dbReference>
<dbReference type="GO" id="GO:0033962">
    <property type="term" value="P:P-body assembly"/>
    <property type="evidence" value="ECO:0000318"/>
    <property type="project" value="GO_Central"/>
</dbReference>
<dbReference type="GO" id="GO:0000387">
    <property type="term" value="P:spliceosomal snRNP assembly"/>
    <property type="evidence" value="ECO:0000318"/>
    <property type="project" value="GO_Central"/>
</dbReference>
<dbReference type="CDD" id="cd01723">
    <property type="entry name" value="LSm4"/>
    <property type="match status" value="1"/>
</dbReference>
<dbReference type="FunFam" id="2.30.30.100:FF:000087">
    <property type="entry name" value="U6 snRNA-associated Sm-like protein LSm4"/>
    <property type="match status" value="1"/>
</dbReference>
<dbReference type="Gene3D" id="2.30.30.100">
    <property type="match status" value="1"/>
</dbReference>
<dbReference type="InterPro" id="IPR034101">
    <property type="entry name" value="Lsm4"/>
</dbReference>
<dbReference type="InterPro" id="IPR027141">
    <property type="entry name" value="LSm4/Sm_D1/D3"/>
</dbReference>
<dbReference type="InterPro" id="IPR010920">
    <property type="entry name" value="LSM_dom_sf"/>
</dbReference>
<dbReference type="InterPro" id="IPR047575">
    <property type="entry name" value="Sm"/>
</dbReference>
<dbReference type="InterPro" id="IPR001163">
    <property type="entry name" value="Sm_dom_euk/arc"/>
</dbReference>
<dbReference type="PANTHER" id="PTHR23338">
    <property type="entry name" value="SMALL NUCLEAR RIBONUCLEOPROTEIN SM"/>
    <property type="match status" value="1"/>
</dbReference>
<dbReference type="Pfam" id="PF01423">
    <property type="entry name" value="LSM"/>
    <property type="match status" value="1"/>
</dbReference>
<dbReference type="SMART" id="SM00651">
    <property type="entry name" value="Sm"/>
    <property type="match status" value="1"/>
</dbReference>
<dbReference type="SUPFAM" id="SSF50182">
    <property type="entry name" value="Sm-like ribonucleoproteins"/>
    <property type="match status" value="1"/>
</dbReference>
<dbReference type="PROSITE" id="PS52002">
    <property type="entry name" value="SM"/>
    <property type="match status" value="1"/>
</dbReference>
<gene>
    <name type="primary">lsm-4</name>
    <name type="ORF">F32A5.7</name>
</gene>
<proteinExistence type="inferred from homology"/>
<feature type="chain" id="PRO_0000125566" description="Probable U6 snRNA-associated Sm-like protein LSm4">
    <location>
        <begin position="1"/>
        <end position="123"/>
    </location>
</feature>
<feature type="domain" description="Sm" evidence="2">
    <location>
        <begin position="3"/>
        <end position="76"/>
    </location>
</feature>
<feature type="region of interest" description="Disordered" evidence="3">
    <location>
        <begin position="85"/>
        <end position="123"/>
    </location>
</feature>
<feature type="compositionally biased region" description="Basic and acidic residues" evidence="3">
    <location>
        <begin position="85"/>
        <end position="97"/>
    </location>
</feature>
<feature type="compositionally biased region" description="Gly residues" evidence="3">
    <location>
        <begin position="98"/>
        <end position="123"/>
    </location>
</feature>
<evidence type="ECO:0000250" key="1">
    <source>
        <dbReference type="UniProtKB" id="Q9Y4Z0"/>
    </source>
</evidence>
<evidence type="ECO:0000255" key="2">
    <source>
        <dbReference type="PROSITE-ProRule" id="PRU01346"/>
    </source>
</evidence>
<evidence type="ECO:0000256" key="3">
    <source>
        <dbReference type="SAM" id="MobiDB-lite"/>
    </source>
</evidence>
<evidence type="ECO:0000305" key="4"/>
<name>LSM4_CAEEL</name>
<protein>
    <recommendedName>
        <fullName>Probable U6 snRNA-associated Sm-like protein LSm4</fullName>
    </recommendedName>
</protein>
<reference key="1">
    <citation type="journal article" date="1998" name="Science">
        <title>Genome sequence of the nematode C. elegans: a platform for investigating biology.</title>
        <authorList>
            <consortium name="The C. elegans sequencing consortium"/>
        </authorList>
    </citation>
    <scope>NUCLEOTIDE SEQUENCE [LARGE SCALE GENOMIC DNA]</scope>
    <source>
        <strain>Bristol N2</strain>
    </source>
</reference>